<dbReference type="EMBL" id="BX677675">
    <property type="protein sequence ID" value="CAQ14863.1"/>
    <property type="molecule type" value="Genomic_DNA"/>
</dbReference>
<dbReference type="EMBL" id="BC076521">
    <property type="protein sequence ID" value="AAH76521.1"/>
    <property type="molecule type" value="mRNA"/>
</dbReference>
<dbReference type="RefSeq" id="NP_001002667.1">
    <property type="nucleotide sequence ID" value="NM_001002667.1"/>
</dbReference>
<dbReference type="SMR" id="Q6DG32"/>
<dbReference type="FunCoup" id="Q6DG32">
    <property type="interactions" value="2823"/>
</dbReference>
<dbReference type="STRING" id="7955.ENSDARP00000004962"/>
<dbReference type="PaxDb" id="7955-ENSDARP00000004962"/>
<dbReference type="Ensembl" id="ENSDART00000007333">
    <property type="protein sequence ID" value="ENSDARP00000004962"/>
    <property type="gene ID" value="ENSDARG00000038731"/>
</dbReference>
<dbReference type="Ensembl" id="ENSDART00000182482">
    <property type="protein sequence ID" value="ENSDARP00000156517"/>
    <property type="gene ID" value="ENSDARG00000111673"/>
</dbReference>
<dbReference type="GeneID" id="436940"/>
<dbReference type="KEGG" id="dre:436940"/>
<dbReference type="AGR" id="ZFIN:ZDB-GENE-040718-415"/>
<dbReference type="CTD" id="436940"/>
<dbReference type="ZFIN" id="ZDB-GENE-040718-415">
    <property type="gene designation" value="slc25a36a"/>
</dbReference>
<dbReference type="eggNOG" id="KOG0757">
    <property type="taxonomic scope" value="Eukaryota"/>
</dbReference>
<dbReference type="HOGENOM" id="CLU_015166_6_0_1"/>
<dbReference type="InParanoid" id="Q6DG32"/>
<dbReference type="OMA" id="WVMYEQM"/>
<dbReference type="OrthoDB" id="269120at2759"/>
<dbReference type="PhylomeDB" id="Q6DG32"/>
<dbReference type="TreeFam" id="TF314220"/>
<dbReference type="PRO" id="PR:Q6DG32"/>
<dbReference type="Proteomes" id="UP000000437">
    <property type="component" value="Alternate scaffold 2"/>
</dbReference>
<dbReference type="Proteomes" id="UP000000437">
    <property type="component" value="Chromosome 2"/>
</dbReference>
<dbReference type="Bgee" id="ENSDARG00000038731">
    <property type="expression patterns" value="Expressed in retina and 20 other cell types or tissues"/>
</dbReference>
<dbReference type="ExpressionAtlas" id="Q6DG32">
    <property type="expression patterns" value="baseline"/>
</dbReference>
<dbReference type="GO" id="GO:0005743">
    <property type="term" value="C:mitochondrial inner membrane"/>
    <property type="evidence" value="ECO:0007669"/>
    <property type="project" value="UniProtKB-SubCell"/>
</dbReference>
<dbReference type="GO" id="GO:0005739">
    <property type="term" value="C:mitochondrion"/>
    <property type="evidence" value="ECO:0000318"/>
    <property type="project" value="GO_Central"/>
</dbReference>
<dbReference type="GO" id="GO:0015218">
    <property type="term" value="F:pyrimidine nucleotide transmembrane transporter activity"/>
    <property type="evidence" value="ECO:0000318"/>
    <property type="project" value="GO_Central"/>
</dbReference>
<dbReference type="GO" id="GO:0000002">
    <property type="term" value="P:mitochondrial genome maintenance"/>
    <property type="evidence" value="ECO:0000318"/>
    <property type="project" value="GO_Central"/>
</dbReference>
<dbReference type="GO" id="GO:1990519">
    <property type="term" value="P:pyrimidine nucleotide import into mitochondrion"/>
    <property type="evidence" value="ECO:0000318"/>
    <property type="project" value="GO_Central"/>
</dbReference>
<dbReference type="FunFam" id="1.50.40.10:FF:000074">
    <property type="entry name" value="Solute carrier family 25 member 36"/>
    <property type="match status" value="1"/>
</dbReference>
<dbReference type="FunFam" id="1.50.40.10:FF:000124">
    <property type="entry name" value="Solute carrier family 25 member 36"/>
    <property type="match status" value="1"/>
</dbReference>
<dbReference type="Gene3D" id="1.50.40.10">
    <property type="entry name" value="Mitochondrial carrier domain"/>
    <property type="match status" value="2"/>
</dbReference>
<dbReference type="InterPro" id="IPR002067">
    <property type="entry name" value="Mit_carrier"/>
</dbReference>
<dbReference type="InterPro" id="IPR018108">
    <property type="entry name" value="Mitochondrial_sb/sol_carrier"/>
</dbReference>
<dbReference type="InterPro" id="IPR023395">
    <property type="entry name" value="Mt_carrier_dom_sf"/>
</dbReference>
<dbReference type="InterPro" id="IPR049562">
    <property type="entry name" value="SLC25A33/36-like"/>
</dbReference>
<dbReference type="PANTHER" id="PTHR45829">
    <property type="entry name" value="MITOCHONDRIAL CARRIER PROTEIN RIM2"/>
    <property type="match status" value="1"/>
</dbReference>
<dbReference type="PANTHER" id="PTHR45829:SF2">
    <property type="entry name" value="SOLUTE CARRIER FAMILY 25 MEMBER 36"/>
    <property type="match status" value="1"/>
</dbReference>
<dbReference type="Pfam" id="PF00153">
    <property type="entry name" value="Mito_carr"/>
    <property type="match status" value="3"/>
</dbReference>
<dbReference type="PRINTS" id="PR00926">
    <property type="entry name" value="MITOCARRIER"/>
</dbReference>
<dbReference type="SUPFAM" id="SSF103506">
    <property type="entry name" value="Mitochondrial carrier"/>
    <property type="match status" value="1"/>
</dbReference>
<dbReference type="PROSITE" id="PS50920">
    <property type="entry name" value="SOLCAR"/>
    <property type="match status" value="3"/>
</dbReference>
<feature type="chain" id="PRO_0000291800" description="Solute carrier family 25 member 36-A">
    <location>
        <begin position="1"/>
        <end position="311"/>
    </location>
</feature>
<feature type="transmembrane region" description="Helical; Name=1" evidence="2">
    <location>
        <begin position="7"/>
        <end position="27"/>
    </location>
</feature>
<feature type="transmembrane region" description="Helical; Name=2" evidence="2">
    <location>
        <begin position="41"/>
        <end position="57"/>
    </location>
</feature>
<feature type="transmembrane region" description="Helical; Name=3" evidence="2">
    <location>
        <begin position="111"/>
        <end position="131"/>
    </location>
</feature>
<feature type="transmembrane region" description="Helical; Name=4" evidence="2">
    <location>
        <begin position="180"/>
        <end position="200"/>
    </location>
</feature>
<feature type="transmembrane region" description="Helical; Name=5" evidence="2">
    <location>
        <begin position="226"/>
        <end position="246"/>
    </location>
</feature>
<feature type="transmembrane region" description="Helical; Name=6" evidence="2">
    <location>
        <begin position="291"/>
        <end position="311"/>
    </location>
</feature>
<feature type="repeat" description="Solcar 1">
    <location>
        <begin position="4"/>
        <end position="108"/>
    </location>
</feature>
<feature type="repeat" description="Solcar 2">
    <location>
        <begin position="116"/>
        <end position="203"/>
    </location>
</feature>
<feature type="repeat" description="Solcar 3">
    <location>
        <begin position="224"/>
        <end position="308"/>
    </location>
</feature>
<name>S2536_DANRE</name>
<evidence type="ECO:0000250" key="1"/>
<evidence type="ECO:0000255" key="2"/>
<evidence type="ECO:0000305" key="3"/>
<accession>Q6DG32</accession>
<accession>B0S7H5</accession>
<gene>
    <name type="primary">slc25a36a</name>
    <name type="ORF">si:dkeyp-90g12.1</name>
    <name type="ORF">zgc:92447</name>
</gene>
<proteinExistence type="evidence at transcript level"/>
<organism>
    <name type="scientific">Danio rerio</name>
    <name type="common">Zebrafish</name>
    <name type="synonym">Brachydanio rerio</name>
    <dbReference type="NCBI Taxonomy" id="7955"/>
    <lineage>
        <taxon>Eukaryota</taxon>
        <taxon>Metazoa</taxon>
        <taxon>Chordata</taxon>
        <taxon>Craniata</taxon>
        <taxon>Vertebrata</taxon>
        <taxon>Euteleostomi</taxon>
        <taxon>Actinopterygii</taxon>
        <taxon>Neopterygii</taxon>
        <taxon>Teleostei</taxon>
        <taxon>Ostariophysi</taxon>
        <taxon>Cypriniformes</taxon>
        <taxon>Danionidae</taxon>
        <taxon>Danioninae</taxon>
        <taxon>Danio</taxon>
    </lineage>
</organism>
<protein>
    <recommendedName>
        <fullName>Solute carrier family 25 member 36-A</fullName>
    </recommendedName>
</protein>
<sequence>MSQRDTLVHLFAGGCGGTVGAILTCPLEVVKTRLQSSSVTFYISEVQLSTVNGASVARMAPPGPLHCLKLILEKEGPRSLFRGLGPNLVGVAPSRAIYFAAYSTSKEKLNNVFDPDSTQVHMLSAGLAGFTAITATNPIWLIKTRLQLDARNRGERRMSAFECVRRVYQSDGLRGFYRGMSASYAGISETVIHFVIYESIKRKLIEHKANSNMDDEDESVKDASDFVGMMLAAATSKTCATSIAYPHEVIRTRLREEGSKYRSFFQTLNMVFREEGYRALYRGLTTHLVRQIPNTAIMMCTYELVVYLLNG</sequence>
<keyword id="KW-0472">Membrane</keyword>
<keyword id="KW-0496">Mitochondrion</keyword>
<keyword id="KW-0999">Mitochondrion inner membrane</keyword>
<keyword id="KW-1185">Reference proteome</keyword>
<keyword id="KW-0677">Repeat</keyword>
<keyword id="KW-0812">Transmembrane</keyword>
<keyword id="KW-1133">Transmembrane helix</keyword>
<keyword id="KW-0813">Transport</keyword>
<comment type="subcellular location">
    <subcellularLocation>
        <location evidence="1">Mitochondrion inner membrane</location>
        <topology evidence="1">Multi-pass membrane protein</topology>
    </subcellularLocation>
</comment>
<comment type="similarity">
    <text evidence="3">Belongs to the mitochondrial carrier (TC 2.A.29) family.</text>
</comment>
<reference key="1">
    <citation type="journal article" date="2013" name="Nature">
        <title>The zebrafish reference genome sequence and its relationship to the human genome.</title>
        <authorList>
            <person name="Howe K."/>
            <person name="Clark M.D."/>
            <person name="Torroja C.F."/>
            <person name="Torrance J."/>
            <person name="Berthelot C."/>
            <person name="Muffato M."/>
            <person name="Collins J.E."/>
            <person name="Humphray S."/>
            <person name="McLaren K."/>
            <person name="Matthews L."/>
            <person name="McLaren S."/>
            <person name="Sealy I."/>
            <person name="Caccamo M."/>
            <person name="Churcher C."/>
            <person name="Scott C."/>
            <person name="Barrett J.C."/>
            <person name="Koch R."/>
            <person name="Rauch G.J."/>
            <person name="White S."/>
            <person name="Chow W."/>
            <person name="Kilian B."/>
            <person name="Quintais L.T."/>
            <person name="Guerra-Assuncao J.A."/>
            <person name="Zhou Y."/>
            <person name="Gu Y."/>
            <person name="Yen J."/>
            <person name="Vogel J.H."/>
            <person name="Eyre T."/>
            <person name="Redmond S."/>
            <person name="Banerjee R."/>
            <person name="Chi J."/>
            <person name="Fu B."/>
            <person name="Langley E."/>
            <person name="Maguire S.F."/>
            <person name="Laird G.K."/>
            <person name="Lloyd D."/>
            <person name="Kenyon E."/>
            <person name="Donaldson S."/>
            <person name="Sehra H."/>
            <person name="Almeida-King J."/>
            <person name="Loveland J."/>
            <person name="Trevanion S."/>
            <person name="Jones M."/>
            <person name="Quail M."/>
            <person name="Willey D."/>
            <person name="Hunt A."/>
            <person name="Burton J."/>
            <person name="Sims S."/>
            <person name="McLay K."/>
            <person name="Plumb B."/>
            <person name="Davis J."/>
            <person name="Clee C."/>
            <person name="Oliver K."/>
            <person name="Clark R."/>
            <person name="Riddle C."/>
            <person name="Elliot D."/>
            <person name="Threadgold G."/>
            <person name="Harden G."/>
            <person name="Ware D."/>
            <person name="Begum S."/>
            <person name="Mortimore B."/>
            <person name="Kerry G."/>
            <person name="Heath P."/>
            <person name="Phillimore B."/>
            <person name="Tracey A."/>
            <person name="Corby N."/>
            <person name="Dunn M."/>
            <person name="Johnson C."/>
            <person name="Wood J."/>
            <person name="Clark S."/>
            <person name="Pelan S."/>
            <person name="Griffiths G."/>
            <person name="Smith M."/>
            <person name="Glithero R."/>
            <person name="Howden P."/>
            <person name="Barker N."/>
            <person name="Lloyd C."/>
            <person name="Stevens C."/>
            <person name="Harley J."/>
            <person name="Holt K."/>
            <person name="Panagiotidis G."/>
            <person name="Lovell J."/>
            <person name="Beasley H."/>
            <person name="Henderson C."/>
            <person name="Gordon D."/>
            <person name="Auger K."/>
            <person name="Wright D."/>
            <person name="Collins J."/>
            <person name="Raisen C."/>
            <person name="Dyer L."/>
            <person name="Leung K."/>
            <person name="Robertson L."/>
            <person name="Ambridge K."/>
            <person name="Leongamornlert D."/>
            <person name="McGuire S."/>
            <person name="Gilderthorp R."/>
            <person name="Griffiths C."/>
            <person name="Manthravadi D."/>
            <person name="Nichol S."/>
            <person name="Barker G."/>
            <person name="Whitehead S."/>
            <person name="Kay M."/>
            <person name="Brown J."/>
            <person name="Murnane C."/>
            <person name="Gray E."/>
            <person name="Humphries M."/>
            <person name="Sycamore N."/>
            <person name="Barker D."/>
            <person name="Saunders D."/>
            <person name="Wallis J."/>
            <person name="Babbage A."/>
            <person name="Hammond S."/>
            <person name="Mashreghi-Mohammadi M."/>
            <person name="Barr L."/>
            <person name="Martin S."/>
            <person name="Wray P."/>
            <person name="Ellington A."/>
            <person name="Matthews N."/>
            <person name="Ellwood M."/>
            <person name="Woodmansey R."/>
            <person name="Clark G."/>
            <person name="Cooper J."/>
            <person name="Tromans A."/>
            <person name="Grafham D."/>
            <person name="Skuce C."/>
            <person name="Pandian R."/>
            <person name="Andrews R."/>
            <person name="Harrison E."/>
            <person name="Kimberley A."/>
            <person name="Garnett J."/>
            <person name="Fosker N."/>
            <person name="Hall R."/>
            <person name="Garner P."/>
            <person name="Kelly D."/>
            <person name="Bird C."/>
            <person name="Palmer S."/>
            <person name="Gehring I."/>
            <person name="Berger A."/>
            <person name="Dooley C.M."/>
            <person name="Ersan-Urun Z."/>
            <person name="Eser C."/>
            <person name="Geiger H."/>
            <person name="Geisler M."/>
            <person name="Karotki L."/>
            <person name="Kirn A."/>
            <person name="Konantz J."/>
            <person name="Konantz M."/>
            <person name="Oberlander M."/>
            <person name="Rudolph-Geiger S."/>
            <person name="Teucke M."/>
            <person name="Lanz C."/>
            <person name="Raddatz G."/>
            <person name="Osoegawa K."/>
            <person name="Zhu B."/>
            <person name="Rapp A."/>
            <person name="Widaa S."/>
            <person name="Langford C."/>
            <person name="Yang F."/>
            <person name="Schuster S.C."/>
            <person name="Carter N.P."/>
            <person name="Harrow J."/>
            <person name="Ning Z."/>
            <person name="Herrero J."/>
            <person name="Searle S.M."/>
            <person name="Enright A."/>
            <person name="Geisler R."/>
            <person name="Plasterk R.H."/>
            <person name="Lee C."/>
            <person name="Westerfield M."/>
            <person name="de Jong P.J."/>
            <person name="Zon L.I."/>
            <person name="Postlethwait J.H."/>
            <person name="Nusslein-Volhard C."/>
            <person name="Hubbard T.J."/>
            <person name="Roest Crollius H."/>
            <person name="Rogers J."/>
            <person name="Stemple D.L."/>
        </authorList>
    </citation>
    <scope>NUCLEOTIDE SEQUENCE [LARGE SCALE GENOMIC DNA]</scope>
    <source>
        <strain>Tuebingen</strain>
    </source>
</reference>
<reference key="2">
    <citation type="submission" date="2004-07" db="EMBL/GenBank/DDBJ databases">
        <authorList>
            <consortium name="NIH - Zebrafish Gene Collection (ZGC) project"/>
        </authorList>
    </citation>
    <scope>NUCLEOTIDE SEQUENCE [LARGE SCALE MRNA]</scope>
</reference>